<feature type="chain" id="PRO_0000432990" description="Protein MRG2">
    <location>
        <begin position="1"/>
        <end position="327"/>
    </location>
</feature>
<feature type="domain" description="Tudor-knot" evidence="2">
    <location>
        <begin position="52"/>
        <end position="101"/>
    </location>
</feature>
<feature type="domain" description="MRG" evidence="3">
    <location>
        <begin position="162"/>
        <end position="327"/>
    </location>
</feature>
<feature type="region of interest" description="Disordered" evidence="4">
    <location>
        <begin position="1"/>
        <end position="40"/>
    </location>
</feature>
<feature type="region of interest" description="Disordered" evidence="4">
    <location>
        <begin position="133"/>
        <end position="156"/>
    </location>
</feature>
<feature type="mutagenesis site" description="Loss of H3K4me3/H3K36me3 binding capacity and loss of activity." evidence="6">
    <original>Y</original>
    <variation>A</variation>
    <location>
        <position position="87"/>
    </location>
</feature>
<feature type="strand" evidence="12">
    <location>
        <begin position="57"/>
        <end position="62"/>
    </location>
</feature>
<feature type="strand" evidence="12">
    <location>
        <begin position="65"/>
        <end position="77"/>
    </location>
</feature>
<feature type="strand" evidence="12">
    <location>
        <begin position="80"/>
        <end position="87"/>
    </location>
</feature>
<feature type="helix" evidence="12">
    <location>
        <begin position="92"/>
        <end position="94"/>
    </location>
</feature>
<feature type="strand" evidence="12">
    <location>
        <begin position="96"/>
        <end position="99"/>
    </location>
</feature>
<feature type="helix" evidence="12">
    <location>
        <begin position="100"/>
        <end position="102"/>
    </location>
</feature>
<feature type="strand" evidence="13">
    <location>
        <begin position="103"/>
        <end position="105"/>
    </location>
</feature>
<keyword id="KW-0002">3D-structure</keyword>
<keyword id="KW-0156">Chromatin regulator</keyword>
<keyword id="KW-0539">Nucleus</keyword>
<keyword id="KW-1185">Reference proteome</keyword>
<keyword id="KW-0804">Transcription</keyword>
<keyword id="KW-0805">Transcription regulation</keyword>
<sequence>MGSPNAAAETDLTTDDFIGDTRRDSGSDTETNTDCDGEDLPLLLLPAPPGHFEEGERVLAKHSDCFYEAKVLKVEFKDNEWKYFVHYIGWNKSWDEWIRLDCLLKHSDENIEKQKEQGLKQQGIKSAMAWKVSKMKPRSPNVARGRKRKQDSVDTEKNVLPSDNLLSFNIPPALRKQLLDDFEFVTQMQKLVQLPRSPNVDGILKKYIDSQMKKHGRVTDSLEEILKGLRCYFDKALPVMLLYNNERKQYEESVSGGVSPSTVYGAEHLLRLFVKLPELLVHVNMAEETLKELQDNFVDILRFLRKNQSVLFVSTYKAVEEMEKKEG</sequence>
<proteinExistence type="evidence at protein level"/>
<accession>Q4V3E2</accession>
<accession>Q9SRX0</accession>
<comment type="function">
    <text evidence="5 6">Chromatin remodeling factor. Acts as a 'reader' protein by binding to H3K4me3 and H3K36me3 to control histone H4 acetylation. Increases the transcriptional levels of the flowering time genes FLC and FT (PubMed:25183522, PubMed:25211338). Binds the chromatin at the FT promoter upon interaction with CO (PubMed:25211338).</text>
</comment>
<comment type="subunit">
    <text evidence="1 5 6">Interacts with HAM1 and HAM2 (PubMed:25183522). Interacts (via MRG domain) with CO (PubMed:25211338). Component of the NuA4 histone acetyltransferase complex (By similarity).</text>
</comment>
<comment type="subcellular location">
    <subcellularLocation>
        <location evidence="8">Nucleus</location>
    </subcellularLocation>
</comment>
<comment type="tissue specificity">
    <text evidence="5 6">Ubiquitous (PubMed:25183522). Mainly expressed in the vasculature of cotyledons and leaves, and in roots and inflorescences (PubMed:25211338).</text>
</comment>
<comment type="disruption phenotype">
    <text evidence="5 6">No visible phenotype, due to the redundancy with MRG1. Mrg1 and mrg2 double mutants are late-flowering under long-day growth conditions.</text>
</comment>
<comment type="sequence caution" evidence="8">
    <conflict type="erroneous gene model prediction">
        <sequence resource="EMBL-CDS" id="AAF02891"/>
    </conflict>
</comment>
<organism evidence="11">
    <name type="scientific">Arabidopsis thaliana</name>
    <name type="common">Mouse-ear cress</name>
    <dbReference type="NCBI Taxonomy" id="3702"/>
    <lineage>
        <taxon>Eukaryota</taxon>
        <taxon>Viridiplantae</taxon>
        <taxon>Streptophyta</taxon>
        <taxon>Embryophyta</taxon>
        <taxon>Tracheophyta</taxon>
        <taxon>Spermatophyta</taxon>
        <taxon>Magnoliopsida</taxon>
        <taxon>eudicotyledons</taxon>
        <taxon>Gunneridae</taxon>
        <taxon>Pentapetalae</taxon>
        <taxon>rosids</taxon>
        <taxon>malvids</taxon>
        <taxon>Brassicales</taxon>
        <taxon>Brassicaceae</taxon>
        <taxon>Camelineae</taxon>
        <taxon>Arabidopsis</taxon>
    </lineage>
</organism>
<protein>
    <recommendedName>
        <fullName evidence="7">Protein MRG2</fullName>
    </recommendedName>
    <alternativeName>
        <fullName evidence="7">MRG family protein 2</fullName>
    </alternativeName>
    <alternativeName>
        <fullName evidence="7">Morf Related Gene 2</fullName>
    </alternativeName>
</protein>
<reference key="1">
    <citation type="journal article" date="2000" name="Nature">
        <title>Sequence and analysis of chromosome 1 of the plant Arabidopsis thaliana.</title>
        <authorList>
            <person name="Theologis A."/>
            <person name="Ecker J.R."/>
            <person name="Palm C.J."/>
            <person name="Federspiel N.A."/>
            <person name="Kaul S."/>
            <person name="White O."/>
            <person name="Alonso J."/>
            <person name="Altafi H."/>
            <person name="Araujo R."/>
            <person name="Bowman C.L."/>
            <person name="Brooks S.Y."/>
            <person name="Buehler E."/>
            <person name="Chan A."/>
            <person name="Chao Q."/>
            <person name="Chen H."/>
            <person name="Cheuk R.F."/>
            <person name="Chin C.W."/>
            <person name="Chung M.K."/>
            <person name="Conn L."/>
            <person name="Conway A.B."/>
            <person name="Conway A.R."/>
            <person name="Creasy T.H."/>
            <person name="Dewar K."/>
            <person name="Dunn P."/>
            <person name="Etgu P."/>
            <person name="Feldblyum T.V."/>
            <person name="Feng J.-D."/>
            <person name="Fong B."/>
            <person name="Fujii C.Y."/>
            <person name="Gill J.E."/>
            <person name="Goldsmith A.D."/>
            <person name="Haas B."/>
            <person name="Hansen N.F."/>
            <person name="Hughes B."/>
            <person name="Huizar L."/>
            <person name="Hunter J.L."/>
            <person name="Jenkins J."/>
            <person name="Johnson-Hopson C."/>
            <person name="Khan S."/>
            <person name="Khaykin E."/>
            <person name="Kim C.J."/>
            <person name="Koo H.L."/>
            <person name="Kremenetskaia I."/>
            <person name="Kurtz D.B."/>
            <person name="Kwan A."/>
            <person name="Lam B."/>
            <person name="Langin-Hooper S."/>
            <person name="Lee A."/>
            <person name="Lee J.M."/>
            <person name="Lenz C.A."/>
            <person name="Li J.H."/>
            <person name="Li Y.-P."/>
            <person name="Lin X."/>
            <person name="Liu S.X."/>
            <person name="Liu Z.A."/>
            <person name="Luros J.S."/>
            <person name="Maiti R."/>
            <person name="Marziali A."/>
            <person name="Militscher J."/>
            <person name="Miranda M."/>
            <person name="Nguyen M."/>
            <person name="Nierman W.C."/>
            <person name="Osborne B.I."/>
            <person name="Pai G."/>
            <person name="Peterson J."/>
            <person name="Pham P.K."/>
            <person name="Rizzo M."/>
            <person name="Rooney T."/>
            <person name="Rowley D."/>
            <person name="Sakano H."/>
            <person name="Salzberg S.L."/>
            <person name="Schwartz J.R."/>
            <person name="Shinn P."/>
            <person name="Southwick A.M."/>
            <person name="Sun H."/>
            <person name="Tallon L.J."/>
            <person name="Tambunga G."/>
            <person name="Toriumi M.J."/>
            <person name="Town C.D."/>
            <person name="Utterback T."/>
            <person name="Van Aken S."/>
            <person name="Vaysberg M."/>
            <person name="Vysotskaia V.S."/>
            <person name="Walker M."/>
            <person name="Wu D."/>
            <person name="Yu G."/>
            <person name="Fraser C.M."/>
            <person name="Venter J.C."/>
            <person name="Davis R.W."/>
        </authorList>
    </citation>
    <scope>NUCLEOTIDE SEQUENCE [LARGE SCALE GENOMIC DNA]</scope>
    <source>
        <strain>cv. Columbia</strain>
    </source>
</reference>
<reference key="2">
    <citation type="journal article" date="2017" name="Plant J.">
        <title>Araport11: a complete reannotation of the Arabidopsis thaliana reference genome.</title>
        <authorList>
            <person name="Cheng C.Y."/>
            <person name="Krishnakumar V."/>
            <person name="Chan A.P."/>
            <person name="Thibaud-Nissen F."/>
            <person name="Schobel S."/>
            <person name="Town C.D."/>
        </authorList>
    </citation>
    <scope>GENOME REANNOTATION</scope>
    <source>
        <strain>cv. Columbia</strain>
    </source>
</reference>
<reference key="3">
    <citation type="submission" date="2005-05" db="EMBL/GenBank/DDBJ databases">
        <title>Arabidopsis ORF clones.</title>
        <authorList>
            <person name="Kim C.J."/>
            <person name="Chen H."/>
            <person name="Cheuk R."/>
            <person name="Shinn P."/>
            <person name="Ecker J.R."/>
        </authorList>
    </citation>
    <scope>NUCLEOTIDE SEQUENCE [LARGE SCALE MRNA]</scope>
</reference>
<reference key="4">
    <citation type="journal article" date="2014" name="Nucleic Acids Res.">
        <title>Arabidopsis MRG domain proteins bridge two histone modifications to elevate expression of flowering genes.</title>
        <authorList>
            <person name="Xu Y."/>
            <person name="Gan E.S."/>
            <person name="Zhou J."/>
            <person name="Wee W.Y."/>
            <person name="Zhang X."/>
            <person name="Ito T."/>
        </authorList>
    </citation>
    <scope>FUNCTION</scope>
    <scope>DISRUPTION PHENOTYPE</scope>
    <scope>TISSUE SPECIFICITY</scope>
    <scope>INTERACTION WITH HAM1 AND HAM2</scope>
    <source>
        <strain>cv. Columbia</strain>
    </source>
</reference>
<reference key="5">
    <citation type="journal article" date="2014" name="PLoS Genet.">
        <title>Regulation of arabidopsis flowering by the histone mark readers MRG1/2 via interaction with CONSTANS to modulate FT expression.</title>
        <authorList>
            <person name="Bu Z."/>
            <person name="Yu Y."/>
            <person name="Li Z."/>
            <person name="Liu Y."/>
            <person name="Jiang W."/>
            <person name="Huang Y."/>
            <person name="Dong A.W."/>
        </authorList>
    </citation>
    <scope>FUNCTION</scope>
    <scope>DISRUPTION PHENOTYPE</scope>
    <scope>TISSUE SPECIFICITY</scope>
    <scope>INTERACTION WITH CO</scope>
    <scope>X-RAY CRYSTALLOGRAPHY (1.65 ANGSTROMS) OF 53-123 IN COMPLEX WITH TRIMETHYLATED HISTONE H3 PEPTIDES</scope>
    <scope>MUTAGENESIS OF TYR-87</scope>
</reference>
<gene>
    <name evidence="7" type="primary">MRG2</name>
    <name evidence="9" type="ordered locus">At1g02740</name>
    <name evidence="10" type="ORF">F22D16.25</name>
</gene>
<name>MRG2_ARATH</name>
<evidence type="ECO:0000250" key="1">
    <source>
        <dbReference type="UniProtKB" id="Q94C32"/>
    </source>
</evidence>
<evidence type="ECO:0000255" key="2"/>
<evidence type="ECO:0000255" key="3">
    <source>
        <dbReference type="PROSITE-ProRule" id="PRU00972"/>
    </source>
</evidence>
<evidence type="ECO:0000256" key="4">
    <source>
        <dbReference type="SAM" id="MobiDB-lite"/>
    </source>
</evidence>
<evidence type="ECO:0000269" key="5">
    <source>
    </source>
</evidence>
<evidence type="ECO:0000269" key="6">
    <source>
    </source>
</evidence>
<evidence type="ECO:0000303" key="7">
    <source>
    </source>
</evidence>
<evidence type="ECO:0000305" key="8"/>
<evidence type="ECO:0000312" key="9">
    <source>
        <dbReference type="Araport" id="AT1G02740"/>
    </source>
</evidence>
<evidence type="ECO:0000312" key="10">
    <source>
        <dbReference type="EMBL" id="AAF02891.1"/>
    </source>
</evidence>
<evidence type="ECO:0000312" key="11">
    <source>
        <dbReference type="EMBL" id="AAY56405.1"/>
    </source>
</evidence>
<evidence type="ECO:0007829" key="12">
    <source>
        <dbReference type="PDB" id="4PLI"/>
    </source>
</evidence>
<evidence type="ECO:0007829" key="13">
    <source>
        <dbReference type="PDB" id="4PLL"/>
    </source>
</evidence>
<dbReference type="EMBL" id="AC009525">
    <property type="protein sequence ID" value="AAF02891.1"/>
    <property type="status" value="ALT_SEQ"/>
    <property type="molecule type" value="Genomic_DNA"/>
</dbReference>
<dbReference type="EMBL" id="CP002684">
    <property type="protein sequence ID" value="AEE27465.1"/>
    <property type="molecule type" value="Genomic_DNA"/>
</dbReference>
<dbReference type="EMBL" id="BT023414">
    <property type="protein sequence ID" value="AAY56405.1"/>
    <property type="molecule type" value="mRNA"/>
</dbReference>
<dbReference type="PIR" id="E86157">
    <property type="entry name" value="E86157"/>
</dbReference>
<dbReference type="RefSeq" id="NP_171774.2">
    <property type="nucleotide sequence ID" value="NM_100154.4"/>
</dbReference>
<dbReference type="PDB" id="4PL6">
    <property type="method" value="X-ray"/>
    <property type="resolution" value="1.68 A"/>
    <property type="chains" value="A/B=51-123"/>
</dbReference>
<dbReference type="PDB" id="4PLI">
    <property type="method" value="X-ray"/>
    <property type="resolution" value="1.65 A"/>
    <property type="chains" value="A/B=51-123"/>
</dbReference>
<dbReference type="PDB" id="4PLL">
    <property type="method" value="X-ray"/>
    <property type="resolution" value="2.60 A"/>
    <property type="chains" value="A/B=51-123"/>
</dbReference>
<dbReference type="PDBsum" id="4PL6"/>
<dbReference type="PDBsum" id="4PLI"/>
<dbReference type="PDBsum" id="4PLL"/>
<dbReference type="SMR" id="Q4V3E2"/>
<dbReference type="FunCoup" id="Q4V3E2">
    <property type="interactions" value="3376"/>
</dbReference>
<dbReference type="STRING" id="3702.Q4V3E2"/>
<dbReference type="iPTMnet" id="Q4V3E2"/>
<dbReference type="PaxDb" id="3702-AT1G02740.1"/>
<dbReference type="ProteomicsDB" id="250859"/>
<dbReference type="EnsemblPlants" id="AT1G02740.1">
    <property type="protein sequence ID" value="AT1G02740.1"/>
    <property type="gene ID" value="AT1G02740"/>
</dbReference>
<dbReference type="GeneID" id="839455"/>
<dbReference type="Gramene" id="AT1G02740.1">
    <property type="protein sequence ID" value="AT1G02740.1"/>
    <property type="gene ID" value="AT1G02740"/>
</dbReference>
<dbReference type="KEGG" id="ath:AT1G02740"/>
<dbReference type="Araport" id="AT1G02740"/>
<dbReference type="TAIR" id="AT1G02740">
    <property type="gene designation" value="MRG2"/>
</dbReference>
<dbReference type="eggNOG" id="KOG3001">
    <property type="taxonomic scope" value="Eukaryota"/>
</dbReference>
<dbReference type="HOGENOM" id="CLU_039566_1_0_1"/>
<dbReference type="InParanoid" id="Q4V3E2"/>
<dbReference type="OMA" id="HKFFDIE"/>
<dbReference type="OrthoDB" id="124855at2759"/>
<dbReference type="PhylomeDB" id="Q4V3E2"/>
<dbReference type="EvolutionaryTrace" id="Q4V3E2"/>
<dbReference type="PRO" id="PR:Q4V3E2"/>
<dbReference type="Proteomes" id="UP000006548">
    <property type="component" value="Chromosome 1"/>
</dbReference>
<dbReference type="ExpressionAtlas" id="Q4V3E2">
    <property type="expression patterns" value="baseline and differential"/>
</dbReference>
<dbReference type="GO" id="GO:0005634">
    <property type="term" value="C:nucleus"/>
    <property type="evidence" value="ECO:0000314"/>
    <property type="project" value="UniProtKB"/>
</dbReference>
<dbReference type="GO" id="GO:1990188">
    <property type="term" value="F:euchromatin binding"/>
    <property type="evidence" value="ECO:0000314"/>
    <property type="project" value="UniProtKB"/>
</dbReference>
<dbReference type="GO" id="GO:0035064">
    <property type="term" value="F:methylated histone binding"/>
    <property type="evidence" value="ECO:0000314"/>
    <property type="project" value="TAIR"/>
</dbReference>
<dbReference type="GO" id="GO:1990841">
    <property type="term" value="F:promoter-specific chromatin binding"/>
    <property type="evidence" value="ECO:0000353"/>
    <property type="project" value="TAIR"/>
</dbReference>
<dbReference type="GO" id="GO:0040029">
    <property type="term" value="P:epigenetic regulation of gene expression"/>
    <property type="evidence" value="ECO:0000315"/>
    <property type="project" value="UniProtKB"/>
</dbReference>
<dbReference type="GO" id="GO:0006355">
    <property type="term" value="P:regulation of DNA-templated transcription"/>
    <property type="evidence" value="ECO:0007669"/>
    <property type="project" value="InterPro"/>
</dbReference>
<dbReference type="GO" id="GO:0048586">
    <property type="term" value="P:regulation of long-day photoperiodism, flowering"/>
    <property type="evidence" value="ECO:0000316"/>
    <property type="project" value="TAIR"/>
</dbReference>
<dbReference type="GO" id="GO:0048510">
    <property type="term" value="P:regulation of timing of transition from vegetative to reproductive phase"/>
    <property type="evidence" value="ECO:0000315"/>
    <property type="project" value="UniProtKB"/>
</dbReference>
<dbReference type="CDD" id="cd18983">
    <property type="entry name" value="CBD_MSL3_like"/>
    <property type="match status" value="1"/>
</dbReference>
<dbReference type="FunFam" id="1.10.274.30:FF:000005">
    <property type="entry name" value="Chromatin modification-related protein EAF3"/>
    <property type="match status" value="1"/>
</dbReference>
<dbReference type="Gene3D" id="2.30.30.140">
    <property type="match status" value="1"/>
</dbReference>
<dbReference type="Gene3D" id="1.10.274.30">
    <property type="entry name" value="MRG domain"/>
    <property type="match status" value="1"/>
</dbReference>
<dbReference type="InterPro" id="IPR014002">
    <property type="entry name" value="Agenet_dom_plant"/>
</dbReference>
<dbReference type="InterPro" id="IPR016197">
    <property type="entry name" value="Chromo-like_dom_sf"/>
</dbReference>
<dbReference type="InterPro" id="IPR000953">
    <property type="entry name" value="Chromo/chromo_shadow_dom"/>
</dbReference>
<dbReference type="InterPro" id="IPR008676">
    <property type="entry name" value="MRG"/>
</dbReference>
<dbReference type="InterPro" id="IPR038217">
    <property type="entry name" value="MRG_C_sf"/>
</dbReference>
<dbReference type="InterPro" id="IPR026541">
    <property type="entry name" value="MRG_dom"/>
</dbReference>
<dbReference type="InterPro" id="IPR053820">
    <property type="entry name" value="MSL3_chromo-like"/>
</dbReference>
<dbReference type="PANTHER" id="PTHR10880">
    <property type="entry name" value="MORTALITY FACTOR 4-LIKE PROTEIN"/>
    <property type="match status" value="1"/>
</dbReference>
<dbReference type="PANTHER" id="PTHR10880:SF44">
    <property type="entry name" value="PROTEIN MRG2"/>
    <property type="match status" value="1"/>
</dbReference>
<dbReference type="Pfam" id="PF05712">
    <property type="entry name" value="MRG"/>
    <property type="match status" value="1"/>
</dbReference>
<dbReference type="Pfam" id="PF22732">
    <property type="entry name" value="MSL3_chromo-like"/>
    <property type="match status" value="1"/>
</dbReference>
<dbReference type="PIRSF" id="PIRSF038133">
    <property type="entry name" value="HAT_Nua4_EAF3/MRG15"/>
    <property type="match status" value="1"/>
</dbReference>
<dbReference type="SMART" id="SM00743">
    <property type="entry name" value="Agenet"/>
    <property type="match status" value="1"/>
</dbReference>
<dbReference type="SMART" id="SM00298">
    <property type="entry name" value="CHROMO"/>
    <property type="match status" value="1"/>
</dbReference>
<dbReference type="SUPFAM" id="SSF54160">
    <property type="entry name" value="Chromo domain-like"/>
    <property type="match status" value="1"/>
</dbReference>
<dbReference type="PROSITE" id="PS51640">
    <property type="entry name" value="MRG"/>
    <property type="match status" value="1"/>
</dbReference>